<name>SYS_SHIF8</name>
<keyword id="KW-0030">Aminoacyl-tRNA synthetase</keyword>
<keyword id="KW-0067">ATP-binding</keyword>
<keyword id="KW-0963">Cytoplasm</keyword>
<keyword id="KW-0436">Ligase</keyword>
<keyword id="KW-0547">Nucleotide-binding</keyword>
<keyword id="KW-0648">Protein biosynthesis</keyword>
<proteinExistence type="inferred from homology"/>
<comment type="function">
    <text evidence="1">Catalyzes the attachment of serine to tRNA(Ser). Is also able to aminoacylate tRNA(Sec) with serine, to form the misacylated tRNA L-seryl-tRNA(Sec), which will be further converted into selenocysteinyl-tRNA(Sec).</text>
</comment>
<comment type="catalytic activity">
    <reaction evidence="1">
        <text>tRNA(Ser) + L-serine + ATP = L-seryl-tRNA(Ser) + AMP + diphosphate + H(+)</text>
        <dbReference type="Rhea" id="RHEA:12292"/>
        <dbReference type="Rhea" id="RHEA-COMP:9669"/>
        <dbReference type="Rhea" id="RHEA-COMP:9703"/>
        <dbReference type="ChEBI" id="CHEBI:15378"/>
        <dbReference type="ChEBI" id="CHEBI:30616"/>
        <dbReference type="ChEBI" id="CHEBI:33019"/>
        <dbReference type="ChEBI" id="CHEBI:33384"/>
        <dbReference type="ChEBI" id="CHEBI:78442"/>
        <dbReference type="ChEBI" id="CHEBI:78533"/>
        <dbReference type="ChEBI" id="CHEBI:456215"/>
        <dbReference type="EC" id="6.1.1.11"/>
    </reaction>
</comment>
<comment type="catalytic activity">
    <reaction evidence="1">
        <text>tRNA(Sec) + L-serine + ATP = L-seryl-tRNA(Sec) + AMP + diphosphate + H(+)</text>
        <dbReference type="Rhea" id="RHEA:42580"/>
        <dbReference type="Rhea" id="RHEA-COMP:9742"/>
        <dbReference type="Rhea" id="RHEA-COMP:10128"/>
        <dbReference type="ChEBI" id="CHEBI:15378"/>
        <dbReference type="ChEBI" id="CHEBI:30616"/>
        <dbReference type="ChEBI" id="CHEBI:33019"/>
        <dbReference type="ChEBI" id="CHEBI:33384"/>
        <dbReference type="ChEBI" id="CHEBI:78442"/>
        <dbReference type="ChEBI" id="CHEBI:78533"/>
        <dbReference type="ChEBI" id="CHEBI:456215"/>
        <dbReference type="EC" id="6.1.1.11"/>
    </reaction>
</comment>
<comment type="pathway">
    <text evidence="1">Aminoacyl-tRNA biosynthesis; selenocysteinyl-tRNA(Sec) biosynthesis; L-seryl-tRNA(Sec) from L-serine and tRNA(Sec): step 1/1.</text>
</comment>
<comment type="subunit">
    <text evidence="1">Homodimer. The tRNA molecule binds across the dimer.</text>
</comment>
<comment type="subcellular location">
    <subcellularLocation>
        <location evidence="1">Cytoplasm</location>
    </subcellularLocation>
</comment>
<comment type="domain">
    <text evidence="1">Consists of two distinct domains, a catalytic core and a N-terminal extension that is involved in tRNA binding.</text>
</comment>
<comment type="similarity">
    <text evidence="1">Belongs to the class-II aminoacyl-tRNA synthetase family. Type-1 seryl-tRNA synthetase subfamily.</text>
</comment>
<reference key="1">
    <citation type="journal article" date="2006" name="BMC Genomics">
        <title>Complete genome sequence of Shigella flexneri 5b and comparison with Shigella flexneri 2a.</title>
        <authorList>
            <person name="Nie H."/>
            <person name="Yang F."/>
            <person name="Zhang X."/>
            <person name="Yang J."/>
            <person name="Chen L."/>
            <person name="Wang J."/>
            <person name="Xiong Z."/>
            <person name="Peng J."/>
            <person name="Sun L."/>
            <person name="Dong J."/>
            <person name="Xue Y."/>
            <person name="Xu X."/>
            <person name="Chen S."/>
            <person name="Yao Z."/>
            <person name="Shen Y."/>
            <person name="Jin Q."/>
        </authorList>
    </citation>
    <scope>NUCLEOTIDE SEQUENCE [LARGE SCALE GENOMIC DNA]</scope>
    <source>
        <strain>8401</strain>
    </source>
</reference>
<dbReference type="EC" id="6.1.1.11" evidence="1"/>
<dbReference type="EMBL" id="CP000266">
    <property type="protein sequence ID" value="ABF03109.1"/>
    <property type="molecule type" value="Genomic_DNA"/>
</dbReference>
<dbReference type="RefSeq" id="WP_000886683.1">
    <property type="nucleotide sequence ID" value="NC_008258.1"/>
</dbReference>
<dbReference type="SMR" id="Q0T8M9"/>
<dbReference type="GeneID" id="93776527"/>
<dbReference type="KEGG" id="sfv:SFV_0884"/>
<dbReference type="HOGENOM" id="CLU_023797_1_1_6"/>
<dbReference type="UniPathway" id="UPA00906">
    <property type="reaction ID" value="UER00895"/>
</dbReference>
<dbReference type="Proteomes" id="UP000000659">
    <property type="component" value="Chromosome"/>
</dbReference>
<dbReference type="GO" id="GO:0005737">
    <property type="term" value="C:cytoplasm"/>
    <property type="evidence" value="ECO:0007669"/>
    <property type="project" value="UniProtKB-SubCell"/>
</dbReference>
<dbReference type="GO" id="GO:0005524">
    <property type="term" value="F:ATP binding"/>
    <property type="evidence" value="ECO:0007669"/>
    <property type="project" value="UniProtKB-UniRule"/>
</dbReference>
<dbReference type="GO" id="GO:0004828">
    <property type="term" value="F:serine-tRNA ligase activity"/>
    <property type="evidence" value="ECO:0007669"/>
    <property type="project" value="UniProtKB-UniRule"/>
</dbReference>
<dbReference type="GO" id="GO:0016260">
    <property type="term" value="P:selenocysteine biosynthetic process"/>
    <property type="evidence" value="ECO:0007669"/>
    <property type="project" value="UniProtKB-UniRule"/>
</dbReference>
<dbReference type="GO" id="GO:0006434">
    <property type="term" value="P:seryl-tRNA aminoacylation"/>
    <property type="evidence" value="ECO:0007669"/>
    <property type="project" value="UniProtKB-UniRule"/>
</dbReference>
<dbReference type="CDD" id="cd00770">
    <property type="entry name" value="SerRS_core"/>
    <property type="match status" value="1"/>
</dbReference>
<dbReference type="FunFam" id="1.10.287.40:FF:000001">
    <property type="entry name" value="Serine--tRNA ligase"/>
    <property type="match status" value="1"/>
</dbReference>
<dbReference type="FunFam" id="3.30.930.10:FF:000018">
    <property type="entry name" value="Serine--tRNA ligase"/>
    <property type="match status" value="1"/>
</dbReference>
<dbReference type="Gene3D" id="3.30.930.10">
    <property type="entry name" value="Bira Bifunctional Protein, Domain 2"/>
    <property type="match status" value="1"/>
</dbReference>
<dbReference type="Gene3D" id="1.10.287.40">
    <property type="entry name" value="Serine-tRNA synthetase, tRNA binding domain"/>
    <property type="match status" value="1"/>
</dbReference>
<dbReference type="HAMAP" id="MF_00176">
    <property type="entry name" value="Ser_tRNA_synth_type1"/>
    <property type="match status" value="1"/>
</dbReference>
<dbReference type="InterPro" id="IPR002314">
    <property type="entry name" value="aa-tRNA-synt_IIb"/>
</dbReference>
<dbReference type="InterPro" id="IPR006195">
    <property type="entry name" value="aa-tRNA-synth_II"/>
</dbReference>
<dbReference type="InterPro" id="IPR045864">
    <property type="entry name" value="aa-tRNA-synth_II/BPL/LPL"/>
</dbReference>
<dbReference type="InterPro" id="IPR002317">
    <property type="entry name" value="Ser-tRNA-ligase_type_1"/>
</dbReference>
<dbReference type="InterPro" id="IPR015866">
    <property type="entry name" value="Ser-tRNA-synth_1_N"/>
</dbReference>
<dbReference type="InterPro" id="IPR042103">
    <property type="entry name" value="SerRS_1_N_sf"/>
</dbReference>
<dbReference type="InterPro" id="IPR033729">
    <property type="entry name" value="SerRS_core"/>
</dbReference>
<dbReference type="InterPro" id="IPR010978">
    <property type="entry name" value="tRNA-bd_arm"/>
</dbReference>
<dbReference type="NCBIfam" id="TIGR00414">
    <property type="entry name" value="serS"/>
    <property type="match status" value="1"/>
</dbReference>
<dbReference type="PANTHER" id="PTHR43697:SF1">
    <property type="entry name" value="SERINE--TRNA LIGASE"/>
    <property type="match status" value="1"/>
</dbReference>
<dbReference type="PANTHER" id="PTHR43697">
    <property type="entry name" value="SERYL-TRNA SYNTHETASE"/>
    <property type="match status" value="1"/>
</dbReference>
<dbReference type="Pfam" id="PF02403">
    <property type="entry name" value="Seryl_tRNA_N"/>
    <property type="match status" value="1"/>
</dbReference>
<dbReference type="Pfam" id="PF00587">
    <property type="entry name" value="tRNA-synt_2b"/>
    <property type="match status" value="1"/>
</dbReference>
<dbReference type="PIRSF" id="PIRSF001529">
    <property type="entry name" value="Ser-tRNA-synth_IIa"/>
    <property type="match status" value="1"/>
</dbReference>
<dbReference type="PRINTS" id="PR00981">
    <property type="entry name" value="TRNASYNTHSER"/>
</dbReference>
<dbReference type="SUPFAM" id="SSF55681">
    <property type="entry name" value="Class II aaRS and biotin synthetases"/>
    <property type="match status" value="1"/>
</dbReference>
<dbReference type="SUPFAM" id="SSF46589">
    <property type="entry name" value="tRNA-binding arm"/>
    <property type="match status" value="1"/>
</dbReference>
<dbReference type="PROSITE" id="PS50862">
    <property type="entry name" value="AA_TRNA_LIGASE_II"/>
    <property type="match status" value="1"/>
</dbReference>
<feature type="chain" id="PRO_1000019821" description="Serine--tRNA ligase">
    <location>
        <begin position="1"/>
        <end position="430"/>
    </location>
</feature>
<feature type="binding site" evidence="1">
    <location>
        <begin position="237"/>
        <end position="239"/>
    </location>
    <ligand>
        <name>L-serine</name>
        <dbReference type="ChEBI" id="CHEBI:33384"/>
    </ligand>
</feature>
<feature type="binding site" evidence="1">
    <location>
        <begin position="268"/>
        <end position="270"/>
    </location>
    <ligand>
        <name>ATP</name>
        <dbReference type="ChEBI" id="CHEBI:30616"/>
    </ligand>
</feature>
<feature type="binding site" evidence="1">
    <location>
        <position position="291"/>
    </location>
    <ligand>
        <name>L-serine</name>
        <dbReference type="ChEBI" id="CHEBI:33384"/>
    </ligand>
</feature>
<feature type="binding site" evidence="1">
    <location>
        <begin position="355"/>
        <end position="358"/>
    </location>
    <ligand>
        <name>ATP</name>
        <dbReference type="ChEBI" id="CHEBI:30616"/>
    </ligand>
</feature>
<feature type="binding site" evidence="1">
    <location>
        <position position="391"/>
    </location>
    <ligand>
        <name>L-serine</name>
        <dbReference type="ChEBI" id="CHEBI:33384"/>
    </ligand>
</feature>
<sequence>MLDPNLLRNEPDAVAEKLARRGFKLDVDKLGALEERRKVLQVKTENLQAERNSRSKSIGQAKARGEDIEPLRLEVNKLGEELDAAKAELDALQAEIRDIALTIPNLPADEVPVGKDENDNVEVSRWGTPREFDFEVRDHVTLGEMHSGLDFAAAVKLTGSRFVVMKGQIARMHRALSQFMLDLHTEQHGYSENYVPYLVNQDTLYGTGQLPKFAGDLFHTRPLEEEADTSNYALIPTAEVPLTNLVRGEIIDEDDLPIKMTAHTPCFRSEAGSYGRDTRGLIRMHQFDKVEMVQIVRPEDSMAALEEMTGHAEKVLQLLGLPYRKIILCTGDMGFGACKTYDLEVWIPAQNTYREISSCSNVWDFQARRMQARCRSKSDKKTRLVHTLNGSGLAVGRTLVAVMENYQQADGRIEVPEVLRPYMNGLEYIG</sequence>
<accession>Q0T8M9</accession>
<gene>
    <name evidence="1" type="primary">serS</name>
    <name type="ordered locus">SFV_0884</name>
</gene>
<evidence type="ECO:0000255" key="1">
    <source>
        <dbReference type="HAMAP-Rule" id="MF_00176"/>
    </source>
</evidence>
<organism>
    <name type="scientific">Shigella flexneri serotype 5b (strain 8401)</name>
    <dbReference type="NCBI Taxonomy" id="373384"/>
    <lineage>
        <taxon>Bacteria</taxon>
        <taxon>Pseudomonadati</taxon>
        <taxon>Pseudomonadota</taxon>
        <taxon>Gammaproteobacteria</taxon>
        <taxon>Enterobacterales</taxon>
        <taxon>Enterobacteriaceae</taxon>
        <taxon>Shigella</taxon>
    </lineage>
</organism>
<protein>
    <recommendedName>
        <fullName evidence="1">Serine--tRNA ligase</fullName>
        <ecNumber evidence="1">6.1.1.11</ecNumber>
    </recommendedName>
    <alternativeName>
        <fullName evidence="1">Seryl-tRNA synthetase</fullName>
        <shortName evidence="1">SerRS</shortName>
    </alternativeName>
    <alternativeName>
        <fullName evidence="1">Seryl-tRNA(Ser/Sec) synthetase</fullName>
    </alternativeName>
</protein>